<keyword id="KW-0030">Aminoacyl-tRNA synthetase</keyword>
<keyword id="KW-0067">ATP-binding</keyword>
<keyword id="KW-0963">Cytoplasm</keyword>
<keyword id="KW-0436">Ligase</keyword>
<keyword id="KW-0547">Nucleotide-binding</keyword>
<keyword id="KW-0648">Protein biosynthesis</keyword>
<keyword id="KW-1185">Reference proteome</keyword>
<comment type="function">
    <text evidence="1">Catalyzes the attachment of serine to tRNA(Ser). Is also able to aminoacylate tRNA(Sec) with serine, to form the misacylated tRNA L-seryl-tRNA(Sec), which will be further converted into selenocysteinyl-tRNA(Sec).</text>
</comment>
<comment type="catalytic activity">
    <reaction evidence="1">
        <text>tRNA(Ser) + L-serine + ATP = L-seryl-tRNA(Ser) + AMP + diphosphate + H(+)</text>
        <dbReference type="Rhea" id="RHEA:12292"/>
        <dbReference type="Rhea" id="RHEA-COMP:9669"/>
        <dbReference type="Rhea" id="RHEA-COMP:9703"/>
        <dbReference type="ChEBI" id="CHEBI:15378"/>
        <dbReference type="ChEBI" id="CHEBI:30616"/>
        <dbReference type="ChEBI" id="CHEBI:33019"/>
        <dbReference type="ChEBI" id="CHEBI:33384"/>
        <dbReference type="ChEBI" id="CHEBI:78442"/>
        <dbReference type="ChEBI" id="CHEBI:78533"/>
        <dbReference type="ChEBI" id="CHEBI:456215"/>
        <dbReference type="EC" id="6.1.1.11"/>
    </reaction>
</comment>
<comment type="catalytic activity">
    <reaction evidence="1">
        <text>tRNA(Sec) + L-serine + ATP = L-seryl-tRNA(Sec) + AMP + diphosphate + H(+)</text>
        <dbReference type="Rhea" id="RHEA:42580"/>
        <dbReference type="Rhea" id="RHEA-COMP:9742"/>
        <dbReference type="Rhea" id="RHEA-COMP:10128"/>
        <dbReference type="ChEBI" id="CHEBI:15378"/>
        <dbReference type="ChEBI" id="CHEBI:30616"/>
        <dbReference type="ChEBI" id="CHEBI:33019"/>
        <dbReference type="ChEBI" id="CHEBI:33384"/>
        <dbReference type="ChEBI" id="CHEBI:78442"/>
        <dbReference type="ChEBI" id="CHEBI:78533"/>
        <dbReference type="ChEBI" id="CHEBI:456215"/>
        <dbReference type="EC" id="6.1.1.11"/>
    </reaction>
</comment>
<comment type="pathway">
    <text evidence="1">Aminoacyl-tRNA biosynthesis; selenocysteinyl-tRNA(Sec) biosynthesis; L-seryl-tRNA(Sec) from L-serine and tRNA(Sec): step 1/1.</text>
</comment>
<comment type="subunit">
    <text evidence="1">Homodimer. The tRNA molecule binds across the dimer.</text>
</comment>
<comment type="subcellular location">
    <subcellularLocation>
        <location evidence="1">Cytoplasm</location>
    </subcellularLocation>
</comment>
<comment type="domain">
    <text evidence="1">Consists of two distinct domains, a catalytic core and a N-terminal extension that is involved in tRNA binding.</text>
</comment>
<comment type="similarity">
    <text evidence="1">Belongs to the class-II aminoacyl-tRNA synthetase family. Type-1 seryl-tRNA synthetase subfamily.</text>
</comment>
<proteinExistence type="inferred from homology"/>
<feature type="chain" id="PRO_0000122090" description="Serine--tRNA ligase">
    <location>
        <begin position="1"/>
        <end position="431"/>
    </location>
</feature>
<feature type="binding site" evidence="1">
    <location>
        <begin position="237"/>
        <end position="239"/>
    </location>
    <ligand>
        <name>L-serine</name>
        <dbReference type="ChEBI" id="CHEBI:33384"/>
    </ligand>
</feature>
<feature type="binding site" evidence="1">
    <location>
        <begin position="268"/>
        <end position="270"/>
    </location>
    <ligand>
        <name>ATP</name>
        <dbReference type="ChEBI" id="CHEBI:30616"/>
    </ligand>
</feature>
<feature type="binding site" evidence="1">
    <location>
        <position position="291"/>
    </location>
    <ligand>
        <name>L-serine</name>
        <dbReference type="ChEBI" id="CHEBI:33384"/>
    </ligand>
</feature>
<feature type="binding site" evidence="1">
    <location>
        <begin position="355"/>
        <end position="358"/>
    </location>
    <ligand>
        <name>ATP</name>
        <dbReference type="ChEBI" id="CHEBI:30616"/>
    </ligand>
</feature>
<feature type="binding site" evidence="1">
    <location>
        <position position="390"/>
    </location>
    <ligand>
        <name>L-serine</name>
        <dbReference type="ChEBI" id="CHEBI:33384"/>
    </ligand>
</feature>
<dbReference type="EC" id="6.1.1.11" evidence="1"/>
<dbReference type="EMBL" id="AE002098">
    <property type="protein sequence ID" value="AAF42032.1"/>
    <property type="molecule type" value="Genomic_DNA"/>
</dbReference>
<dbReference type="PIR" id="E81053">
    <property type="entry name" value="E81053"/>
</dbReference>
<dbReference type="RefSeq" id="NP_274688.1">
    <property type="nucleotide sequence ID" value="NC_003112.2"/>
</dbReference>
<dbReference type="RefSeq" id="WP_002224981.1">
    <property type="nucleotide sequence ID" value="NC_003112.2"/>
</dbReference>
<dbReference type="SMR" id="Q9JY95"/>
<dbReference type="FunCoup" id="Q9JY95">
    <property type="interactions" value="503"/>
</dbReference>
<dbReference type="STRING" id="122586.NMB1684"/>
<dbReference type="PaxDb" id="122586-NMB1684"/>
<dbReference type="KEGG" id="nme:NMB1684"/>
<dbReference type="PATRIC" id="fig|122586.8.peg.2166"/>
<dbReference type="HOGENOM" id="CLU_023797_1_1_4"/>
<dbReference type="InParanoid" id="Q9JY95"/>
<dbReference type="OrthoDB" id="9804647at2"/>
<dbReference type="UniPathway" id="UPA00906">
    <property type="reaction ID" value="UER00895"/>
</dbReference>
<dbReference type="Proteomes" id="UP000000425">
    <property type="component" value="Chromosome"/>
</dbReference>
<dbReference type="GO" id="GO:0005737">
    <property type="term" value="C:cytoplasm"/>
    <property type="evidence" value="ECO:0007669"/>
    <property type="project" value="UniProtKB-SubCell"/>
</dbReference>
<dbReference type="GO" id="GO:0005524">
    <property type="term" value="F:ATP binding"/>
    <property type="evidence" value="ECO:0007669"/>
    <property type="project" value="UniProtKB-UniRule"/>
</dbReference>
<dbReference type="GO" id="GO:0004828">
    <property type="term" value="F:serine-tRNA ligase activity"/>
    <property type="evidence" value="ECO:0007669"/>
    <property type="project" value="UniProtKB-UniRule"/>
</dbReference>
<dbReference type="GO" id="GO:0016260">
    <property type="term" value="P:selenocysteine biosynthetic process"/>
    <property type="evidence" value="ECO:0007669"/>
    <property type="project" value="UniProtKB-UniRule"/>
</dbReference>
<dbReference type="GO" id="GO:0006434">
    <property type="term" value="P:seryl-tRNA aminoacylation"/>
    <property type="evidence" value="ECO:0007669"/>
    <property type="project" value="UniProtKB-UniRule"/>
</dbReference>
<dbReference type="CDD" id="cd00770">
    <property type="entry name" value="SerRS_core"/>
    <property type="match status" value="1"/>
</dbReference>
<dbReference type="Gene3D" id="3.30.930.10">
    <property type="entry name" value="Bira Bifunctional Protein, Domain 2"/>
    <property type="match status" value="1"/>
</dbReference>
<dbReference type="Gene3D" id="1.10.287.40">
    <property type="entry name" value="Serine-tRNA synthetase, tRNA binding domain"/>
    <property type="match status" value="1"/>
</dbReference>
<dbReference type="HAMAP" id="MF_00176">
    <property type="entry name" value="Ser_tRNA_synth_type1"/>
    <property type="match status" value="1"/>
</dbReference>
<dbReference type="InterPro" id="IPR002314">
    <property type="entry name" value="aa-tRNA-synt_IIb"/>
</dbReference>
<dbReference type="InterPro" id="IPR006195">
    <property type="entry name" value="aa-tRNA-synth_II"/>
</dbReference>
<dbReference type="InterPro" id="IPR045864">
    <property type="entry name" value="aa-tRNA-synth_II/BPL/LPL"/>
</dbReference>
<dbReference type="InterPro" id="IPR002317">
    <property type="entry name" value="Ser-tRNA-ligase_type_1"/>
</dbReference>
<dbReference type="InterPro" id="IPR015866">
    <property type="entry name" value="Ser-tRNA-synth_1_N"/>
</dbReference>
<dbReference type="InterPro" id="IPR042103">
    <property type="entry name" value="SerRS_1_N_sf"/>
</dbReference>
<dbReference type="InterPro" id="IPR033729">
    <property type="entry name" value="SerRS_core"/>
</dbReference>
<dbReference type="InterPro" id="IPR010978">
    <property type="entry name" value="tRNA-bd_arm"/>
</dbReference>
<dbReference type="NCBIfam" id="TIGR00414">
    <property type="entry name" value="serS"/>
    <property type="match status" value="1"/>
</dbReference>
<dbReference type="PANTHER" id="PTHR43697:SF1">
    <property type="entry name" value="SERINE--TRNA LIGASE"/>
    <property type="match status" value="1"/>
</dbReference>
<dbReference type="PANTHER" id="PTHR43697">
    <property type="entry name" value="SERYL-TRNA SYNTHETASE"/>
    <property type="match status" value="1"/>
</dbReference>
<dbReference type="Pfam" id="PF02403">
    <property type="entry name" value="Seryl_tRNA_N"/>
    <property type="match status" value="1"/>
</dbReference>
<dbReference type="Pfam" id="PF00587">
    <property type="entry name" value="tRNA-synt_2b"/>
    <property type="match status" value="1"/>
</dbReference>
<dbReference type="PIRSF" id="PIRSF001529">
    <property type="entry name" value="Ser-tRNA-synth_IIa"/>
    <property type="match status" value="1"/>
</dbReference>
<dbReference type="PRINTS" id="PR00981">
    <property type="entry name" value="TRNASYNTHSER"/>
</dbReference>
<dbReference type="SUPFAM" id="SSF55681">
    <property type="entry name" value="Class II aaRS and biotin synthetases"/>
    <property type="match status" value="1"/>
</dbReference>
<dbReference type="SUPFAM" id="SSF46589">
    <property type="entry name" value="tRNA-binding arm"/>
    <property type="match status" value="1"/>
</dbReference>
<dbReference type="PROSITE" id="PS50862">
    <property type="entry name" value="AA_TRNA_LIGASE_II"/>
    <property type="match status" value="1"/>
</dbReference>
<protein>
    <recommendedName>
        <fullName evidence="1">Serine--tRNA ligase</fullName>
        <ecNumber evidence="1">6.1.1.11</ecNumber>
    </recommendedName>
    <alternativeName>
        <fullName evidence="1">Seryl-tRNA synthetase</fullName>
        <shortName evidence="1">SerRS</shortName>
    </alternativeName>
    <alternativeName>
        <fullName evidence="1">Seryl-tRNA(Ser/Sec) synthetase</fullName>
    </alternativeName>
</protein>
<accession>Q9JY95</accession>
<sequence>MLDIQLLRSNTAAVAERLARRGYDFDTARFDTLEERRKSVQVKTEELQASRNSISKQIGALKGQGKHEEAQAAMNQVAQIKTDLEQAAADLDAVQKELDAWLLSIPNLPHESVPAGKDETENVEVRKVGTPREFDFEIKDHVDLGEPLGLDFEGGAKLSGARFTVMRGQIARLHRALAQFMLDTHTLQHGYTEHYTPYIVDDTTLQGTGQLPKFAEDLFHVTRGGDETKTTQYLIPTAEVTLTNTVADSIIPSEQLPLKLTAHSPCFRSEAGSYGKDTRGLIRQHQFDKVEMVQIVHPEKSYETLEEMVGHAENILKALELPYRVITLCTGDMGFGAAKTYDLEVWVPAQNTYREISSCSNCEDFQARRLKARFKDENGKNRLVHTLNGSGLAVGRTLVAVLENHQNADGSINIPAALQPYMGGVAKLEVK</sequence>
<organism>
    <name type="scientific">Neisseria meningitidis serogroup B (strain ATCC BAA-335 / MC58)</name>
    <dbReference type="NCBI Taxonomy" id="122586"/>
    <lineage>
        <taxon>Bacteria</taxon>
        <taxon>Pseudomonadati</taxon>
        <taxon>Pseudomonadota</taxon>
        <taxon>Betaproteobacteria</taxon>
        <taxon>Neisseriales</taxon>
        <taxon>Neisseriaceae</taxon>
        <taxon>Neisseria</taxon>
    </lineage>
</organism>
<name>SYS_NEIMB</name>
<evidence type="ECO:0000255" key="1">
    <source>
        <dbReference type="HAMAP-Rule" id="MF_00176"/>
    </source>
</evidence>
<reference key="1">
    <citation type="journal article" date="2000" name="Science">
        <title>Complete genome sequence of Neisseria meningitidis serogroup B strain MC58.</title>
        <authorList>
            <person name="Tettelin H."/>
            <person name="Saunders N.J."/>
            <person name="Heidelberg J.F."/>
            <person name="Jeffries A.C."/>
            <person name="Nelson K.E."/>
            <person name="Eisen J.A."/>
            <person name="Ketchum K.A."/>
            <person name="Hood D.W."/>
            <person name="Peden J.F."/>
            <person name="Dodson R.J."/>
            <person name="Nelson W.C."/>
            <person name="Gwinn M.L."/>
            <person name="DeBoy R.T."/>
            <person name="Peterson J.D."/>
            <person name="Hickey E.K."/>
            <person name="Haft D.H."/>
            <person name="Salzberg S.L."/>
            <person name="White O."/>
            <person name="Fleischmann R.D."/>
            <person name="Dougherty B.A."/>
            <person name="Mason T.M."/>
            <person name="Ciecko A."/>
            <person name="Parksey D.S."/>
            <person name="Blair E."/>
            <person name="Cittone H."/>
            <person name="Clark E.B."/>
            <person name="Cotton M.D."/>
            <person name="Utterback T.R."/>
            <person name="Khouri H.M."/>
            <person name="Qin H."/>
            <person name="Vamathevan J.J."/>
            <person name="Gill J."/>
            <person name="Scarlato V."/>
            <person name="Masignani V."/>
            <person name="Pizza M."/>
            <person name="Grandi G."/>
            <person name="Sun L."/>
            <person name="Smith H.O."/>
            <person name="Fraser C.M."/>
            <person name="Moxon E.R."/>
            <person name="Rappuoli R."/>
            <person name="Venter J.C."/>
        </authorList>
    </citation>
    <scope>NUCLEOTIDE SEQUENCE [LARGE SCALE GENOMIC DNA]</scope>
    <source>
        <strain>ATCC BAA-335 / MC58</strain>
    </source>
</reference>
<gene>
    <name evidence="1" type="primary">serS</name>
    <name type="ordered locus">NMB1684</name>
</gene>